<proteinExistence type="inferred from homology"/>
<organism evidence="11">
    <name type="scientific">Haemonchus contortus</name>
    <name type="common">Barber pole worm</name>
    <dbReference type="NCBI Taxonomy" id="6289"/>
    <lineage>
        <taxon>Eukaryota</taxon>
        <taxon>Metazoa</taxon>
        <taxon>Ecdysozoa</taxon>
        <taxon>Nematoda</taxon>
        <taxon>Chromadorea</taxon>
        <taxon>Rhabditida</taxon>
        <taxon>Rhabditina</taxon>
        <taxon>Rhabditomorpha</taxon>
        <taxon>Strongyloidea</taxon>
        <taxon>Trichostrongylidae</taxon>
        <taxon>Haemonchus</taxon>
    </lineage>
</organism>
<dbReference type="EC" id="3.4.24.-" evidence="9"/>
<dbReference type="EMBL" id="FJ812519">
    <property type="protein sequence ID" value="ACZ64272.1"/>
    <property type="molecule type" value="Genomic_DNA"/>
</dbReference>
<dbReference type="SMR" id="D5FM37"/>
<dbReference type="MEROPS" id="M12.319"/>
<dbReference type="GlyCosmos" id="D5FM37">
    <property type="glycosylation" value="2 sites, No reported glycans"/>
</dbReference>
<dbReference type="Proteomes" id="UP000025227">
    <property type="component" value="Unplaced"/>
</dbReference>
<dbReference type="GO" id="GO:0005576">
    <property type="term" value="C:extracellular region"/>
    <property type="evidence" value="ECO:0007669"/>
    <property type="project" value="UniProtKB-SubCell"/>
</dbReference>
<dbReference type="GO" id="GO:0004222">
    <property type="term" value="F:metalloendopeptidase activity"/>
    <property type="evidence" value="ECO:0007669"/>
    <property type="project" value="InterPro"/>
</dbReference>
<dbReference type="GO" id="GO:0008270">
    <property type="term" value="F:zinc ion binding"/>
    <property type="evidence" value="ECO:0007669"/>
    <property type="project" value="InterPro"/>
</dbReference>
<dbReference type="GO" id="GO:0018996">
    <property type="term" value="P:molting cycle, collagen and cuticulin-based cuticle"/>
    <property type="evidence" value="ECO:0007669"/>
    <property type="project" value="InterPro"/>
</dbReference>
<dbReference type="GO" id="GO:0006508">
    <property type="term" value="P:proteolysis"/>
    <property type="evidence" value="ECO:0007669"/>
    <property type="project" value="UniProtKB-KW"/>
</dbReference>
<dbReference type="CDD" id="cd00041">
    <property type="entry name" value="CUB"/>
    <property type="match status" value="1"/>
</dbReference>
<dbReference type="CDD" id="cd04280">
    <property type="entry name" value="ZnMc_astacin_like"/>
    <property type="match status" value="1"/>
</dbReference>
<dbReference type="FunFam" id="3.40.390.10:FF:000028">
    <property type="entry name" value="Zinc metalloproteinase"/>
    <property type="match status" value="1"/>
</dbReference>
<dbReference type="Gene3D" id="3.40.390.10">
    <property type="entry name" value="Collagenase (Catalytic Domain)"/>
    <property type="match status" value="1"/>
</dbReference>
<dbReference type="Gene3D" id="2.60.120.290">
    <property type="entry name" value="Spermadhesin, CUB domain"/>
    <property type="match status" value="1"/>
</dbReference>
<dbReference type="Gene3D" id="2.20.100.10">
    <property type="entry name" value="Thrombospondin type-1 (TSP1) repeat"/>
    <property type="match status" value="1"/>
</dbReference>
<dbReference type="InterPro" id="IPR034035">
    <property type="entry name" value="Astacin-like_dom"/>
</dbReference>
<dbReference type="InterPro" id="IPR000859">
    <property type="entry name" value="CUB_dom"/>
</dbReference>
<dbReference type="InterPro" id="IPR000742">
    <property type="entry name" value="EGF-like_dom"/>
</dbReference>
<dbReference type="InterPro" id="IPR024079">
    <property type="entry name" value="MetalloPept_cat_dom_sf"/>
</dbReference>
<dbReference type="InterPro" id="IPR017050">
    <property type="entry name" value="Metallopeptidase_nem"/>
</dbReference>
<dbReference type="InterPro" id="IPR001506">
    <property type="entry name" value="Peptidase_M12A"/>
</dbReference>
<dbReference type="InterPro" id="IPR006026">
    <property type="entry name" value="Peptidase_Metallo"/>
</dbReference>
<dbReference type="InterPro" id="IPR035914">
    <property type="entry name" value="Sperma_CUB_dom_sf"/>
</dbReference>
<dbReference type="InterPro" id="IPR000884">
    <property type="entry name" value="TSP1_rpt"/>
</dbReference>
<dbReference type="InterPro" id="IPR036383">
    <property type="entry name" value="TSP1_rpt_sf"/>
</dbReference>
<dbReference type="PANTHER" id="PTHR10127">
    <property type="entry name" value="DISCOIDIN, CUB, EGF, LAMININ , AND ZINC METALLOPROTEASE DOMAIN CONTAINING"/>
    <property type="match status" value="1"/>
</dbReference>
<dbReference type="PANTHER" id="PTHR10127:SF849">
    <property type="entry name" value="ZINC METALLOPROTEINASE NAS-36"/>
    <property type="match status" value="1"/>
</dbReference>
<dbReference type="Pfam" id="PF01400">
    <property type="entry name" value="Astacin"/>
    <property type="match status" value="1"/>
</dbReference>
<dbReference type="Pfam" id="PF00431">
    <property type="entry name" value="CUB"/>
    <property type="match status" value="1"/>
</dbReference>
<dbReference type="Pfam" id="PF00090">
    <property type="entry name" value="TSP_1"/>
    <property type="match status" value="1"/>
</dbReference>
<dbReference type="PIRSF" id="PIRSF036365">
    <property type="entry name" value="Astacin_nematoda"/>
    <property type="match status" value="1"/>
</dbReference>
<dbReference type="PRINTS" id="PR00480">
    <property type="entry name" value="ASTACIN"/>
</dbReference>
<dbReference type="SMART" id="SM00042">
    <property type="entry name" value="CUB"/>
    <property type="match status" value="1"/>
</dbReference>
<dbReference type="SMART" id="SM00209">
    <property type="entry name" value="TSP1"/>
    <property type="match status" value="1"/>
</dbReference>
<dbReference type="SMART" id="SM00235">
    <property type="entry name" value="ZnMc"/>
    <property type="match status" value="1"/>
</dbReference>
<dbReference type="SUPFAM" id="SSF55486">
    <property type="entry name" value="Metalloproteases ('zincins'), catalytic domain"/>
    <property type="match status" value="1"/>
</dbReference>
<dbReference type="SUPFAM" id="SSF49854">
    <property type="entry name" value="Spermadhesin, CUB domain"/>
    <property type="match status" value="1"/>
</dbReference>
<dbReference type="SUPFAM" id="SSF82895">
    <property type="entry name" value="TSP-1 type 1 repeat"/>
    <property type="match status" value="1"/>
</dbReference>
<dbReference type="PROSITE" id="PS51864">
    <property type="entry name" value="ASTACIN"/>
    <property type="match status" value="1"/>
</dbReference>
<dbReference type="PROSITE" id="PS01180">
    <property type="entry name" value="CUB"/>
    <property type="match status" value="1"/>
</dbReference>
<dbReference type="PROSITE" id="PS00022">
    <property type="entry name" value="EGF_1"/>
    <property type="match status" value="1"/>
</dbReference>
<dbReference type="PROSITE" id="PS50092">
    <property type="entry name" value="TSP1"/>
    <property type="match status" value="1"/>
</dbReference>
<dbReference type="PROSITE" id="PS00142">
    <property type="entry name" value="ZINC_PROTEASE"/>
    <property type="match status" value="1"/>
</dbReference>
<name>NAS36_HAECO</name>
<accession>D5FM37</accession>
<reference evidence="11" key="1">
    <citation type="journal article" date="2011" name="Parasitology">
        <title>The astacin metalloprotease moulting enzyme NAS-36 is required for normal cuticle ecdysis in free-living and parasitic nematodes.</title>
        <authorList>
            <person name="Stepek G."/>
            <person name="McCormack G."/>
            <person name="Birnie A.J."/>
            <person name="Page A.P."/>
        </authorList>
    </citation>
    <scope>NUCLEOTIDE SEQUENCE [GENOMIC DNA]</scope>
</reference>
<sequence length="612" mass="68068">MLLLVLLFVFISATNASDVGRRELEKHFDVGDSSLDSVGDVLLKLKKLAHQRAFGNREFGHDAEEDSKKPVAISVLQPTVAKDVSPYLFEGDIFLSKKQAINILKEVSGIESKSKPNVRGRRSFDASPESKWPTTAPIKYRFHESIDFYAVSNIIKAIRYWENVTCLEFENSPDVADNEDFIEFFQGQGCYSMIGRNGGRQGVSIGENCVKAGVIEHEIGHAIGMWHEQSRPDAQSYIKVESDFILPSYVSDFLQRDKDIDTLGLPYDLGSVMHYGSTAFSVDQSSKTLITRDPLYQSTIGQRETLSFLDIETINKAYCSDRCSGSNDCKNGGYPHPKQCDTCLCPNGLSGPKCEDFEPPRKAECGGKIVVKEEWQSIESPGFPDPGYDPDQKCNWVFEVAGKRIEFEFIEEFSFLCTSTCVDYVEMKISADLRPTGFRWCCFNIPKGSFVSELNIAVIIFRSQLTNDVGFKLQARATDLPARTTPAPVVITTTPVPTTIEGTDQWAEWGSWSQCSRSCGGCGIMSRVRVCRTKQCKGRRQEFSTCNLKACPIDKHCAKLLANDKICNGRVCTKASQALSGCLEPQCCPPFINVDGTCQSDSPLLNDFELAK</sequence>
<feature type="signal peptide" evidence="3">
    <location>
        <begin position="1"/>
        <end position="16"/>
    </location>
</feature>
<feature type="propeptide" id="PRO_0000442252" evidence="1">
    <location>
        <begin position="17"/>
        <end position="122"/>
    </location>
</feature>
<feature type="chain" id="PRO_5005126565" description="Zinc metalloproteinase nas-36" evidence="3">
    <location>
        <begin position="123"/>
        <end position="612"/>
    </location>
</feature>
<feature type="domain" description="Peptidase M12A" evidence="8">
    <location>
        <begin position="123"/>
        <end position="320"/>
    </location>
</feature>
<feature type="domain" description="EGF-like" evidence="5">
    <location>
        <begin position="320"/>
        <end position="355"/>
    </location>
</feature>
<feature type="domain" description="CUB" evidence="4">
    <location>
        <begin position="365"/>
        <end position="478"/>
    </location>
</feature>
<feature type="domain" description="TSP type-1" evidence="6">
    <location>
        <begin position="503"/>
        <end position="552"/>
    </location>
</feature>
<feature type="active site" evidence="8">
    <location>
        <position position="218"/>
    </location>
</feature>
<feature type="binding site" evidence="8">
    <location>
        <position position="217"/>
    </location>
    <ligand>
        <name>Zn(2+)</name>
        <dbReference type="ChEBI" id="CHEBI:29105"/>
        <note>catalytic</note>
    </ligand>
</feature>
<feature type="binding site" evidence="8">
    <location>
        <position position="221"/>
    </location>
    <ligand>
        <name>Zn(2+)</name>
        <dbReference type="ChEBI" id="CHEBI:29105"/>
        <note>catalytic</note>
    </ligand>
</feature>
<feature type="binding site" evidence="8">
    <location>
        <position position="227"/>
    </location>
    <ligand>
        <name>Zn(2+)</name>
        <dbReference type="ChEBI" id="CHEBI:29105"/>
        <note>catalytic</note>
    </ligand>
</feature>
<feature type="glycosylation site" description="N-linked (GlcNAc...) asparagine" evidence="7">
    <location>
        <position position="15"/>
    </location>
</feature>
<feature type="glycosylation site" description="N-linked (GlcNAc...) asparagine" evidence="7">
    <location>
        <position position="163"/>
    </location>
</feature>
<feature type="disulfide bond" evidence="8">
    <location>
        <begin position="166"/>
        <end position="319"/>
    </location>
</feature>
<feature type="disulfide bond" evidence="8">
    <location>
        <begin position="190"/>
        <end position="209"/>
    </location>
</feature>
<feature type="disulfide bond" evidence="5">
    <location>
        <begin position="329"/>
        <end position="343"/>
    </location>
</feature>
<feature type="disulfide bond" evidence="5">
    <location>
        <begin position="345"/>
        <end position="354"/>
    </location>
</feature>
<feature type="disulfide bond" evidence="4">
    <location>
        <begin position="365"/>
        <end position="394"/>
    </location>
</feature>
<feature type="disulfide bond" evidence="6">
    <location>
        <begin position="515"/>
        <end position="546"/>
    </location>
</feature>
<feature type="disulfide bond" evidence="6">
    <location>
        <begin position="519"/>
        <end position="551"/>
    </location>
</feature>
<feature type="disulfide bond" evidence="6">
    <location>
        <begin position="531"/>
        <end position="536"/>
    </location>
</feature>
<protein>
    <recommendedName>
        <fullName evidence="10">Zinc metalloproteinase nas-36</fullName>
        <ecNumber evidence="9">3.4.24.-</ecNumber>
    </recommendedName>
    <alternativeName>
        <fullName evidence="2">Nematode astacin 36</fullName>
    </alternativeName>
</protein>
<gene>
    <name evidence="11" type="primary">nas-36</name>
</gene>
<keyword id="KW-0165">Cleavage on pair of basic residues</keyword>
<keyword id="KW-1015">Disulfide bond</keyword>
<keyword id="KW-0245">EGF-like domain</keyword>
<keyword id="KW-0325">Glycoprotein</keyword>
<keyword id="KW-0378">Hydrolase</keyword>
<keyword id="KW-0479">Metal-binding</keyword>
<keyword id="KW-0482">Metalloprotease</keyword>
<keyword id="KW-0645">Protease</keyword>
<keyword id="KW-0964">Secreted</keyword>
<keyword id="KW-0732">Signal</keyword>
<keyword id="KW-0862">Zinc</keyword>
<keyword id="KW-0865">Zymogen</keyword>
<evidence type="ECO:0000250" key="1">
    <source>
        <dbReference type="UniProtKB" id="P13497"/>
    </source>
</evidence>
<evidence type="ECO:0000250" key="2">
    <source>
        <dbReference type="UniProtKB" id="Q18206"/>
    </source>
</evidence>
<evidence type="ECO:0000255" key="3"/>
<evidence type="ECO:0000255" key="4">
    <source>
        <dbReference type="PROSITE-ProRule" id="PRU00059"/>
    </source>
</evidence>
<evidence type="ECO:0000255" key="5">
    <source>
        <dbReference type="PROSITE-ProRule" id="PRU00076"/>
    </source>
</evidence>
<evidence type="ECO:0000255" key="6">
    <source>
        <dbReference type="PROSITE-ProRule" id="PRU00210"/>
    </source>
</evidence>
<evidence type="ECO:0000255" key="7">
    <source>
        <dbReference type="PROSITE-ProRule" id="PRU00498"/>
    </source>
</evidence>
<evidence type="ECO:0000255" key="8">
    <source>
        <dbReference type="PROSITE-ProRule" id="PRU01211"/>
    </source>
</evidence>
<evidence type="ECO:0000269" key="9">
    <source>
    </source>
</evidence>
<evidence type="ECO:0000305" key="10"/>
<evidence type="ECO:0000312" key="11">
    <source>
        <dbReference type="EMBL" id="ACZ64272.1"/>
    </source>
</evidence>
<comment type="function">
    <text evidence="2 9">Metalloprotease (PubMed:20800010). Involved in molting, a process during larval stages in which a new cuticle is formed and the old cuticle is shed (By similarity).</text>
</comment>
<comment type="cofactor">
    <cofactor evidence="8">
        <name>Zn(2+)</name>
        <dbReference type="ChEBI" id="CHEBI:29105"/>
    </cofactor>
    <text evidence="8">Binds 1 zinc ion per subunit.</text>
</comment>
<comment type="activity regulation">
    <text evidence="9">Inhibited by 1,10-phenanthroline.</text>
</comment>
<comment type="subcellular location">
    <subcellularLocation>
        <location evidence="10">Secreted</location>
    </subcellularLocation>
</comment>